<reference key="1">
    <citation type="journal article" date="2003" name="Genome Res.">
        <title>Comparative genome analysis of Vibrio vulnificus, a marine pathogen.</title>
        <authorList>
            <person name="Chen C.-Y."/>
            <person name="Wu K.-M."/>
            <person name="Chang Y.-C."/>
            <person name="Chang C.-H."/>
            <person name="Tsai H.-C."/>
            <person name="Liao T.-L."/>
            <person name="Liu Y.-M."/>
            <person name="Chen H.-J."/>
            <person name="Shen A.B.-T."/>
            <person name="Li J.-C."/>
            <person name="Su T.-L."/>
            <person name="Shao C.-P."/>
            <person name="Lee C.-T."/>
            <person name="Hor L.-I."/>
            <person name="Tsai S.-F."/>
        </authorList>
    </citation>
    <scope>NUCLEOTIDE SEQUENCE [LARGE SCALE GENOMIC DNA]</scope>
    <source>
        <strain>YJ016</strain>
    </source>
</reference>
<name>CUTC_VIBVY</name>
<dbReference type="EMBL" id="BA000037">
    <property type="protein sequence ID" value="BAC93502.1"/>
    <property type="molecule type" value="Genomic_DNA"/>
</dbReference>
<dbReference type="RefSeq" id="WP_011149589.1">
    <property type="nucleotide sequence ID" value="NC_005139.1"/>
</dbReference>
<dbReference type="SMR" id="Q7MNH9"/>
<dbReference type="STRING" id="672.VV93_v1c06840"/>
<dbReference type="KEGG" id="vvy:VV0738"/>
<dbReference type="PATRIC" id="fig|196600.6.peg.754"/>
<dbReference type="eggNOG" id="COG3142">
    <property type="taxonomic scope" value="Bacteria"/>
</dbReference>
<dbReference type="HOGENOM" id="CLU_050555_3_1_6"/>
<dbReference type="Proteomes" id="UP000002675">
    <property type="component" value="Chromosome I"/>
</dbReference>
<dbReference type="GO" id="GO:0005737">
    <property type="term" value="C:cytoplasm"/>
    <property type="evidence" value="ECO:0007669"/>
    <property type="project" value="UniProtKB-SubCell"/>
</dbReference>
<dbReference type="GO" id="GO:0005507">
    <property type="term" value="F:copper ion binding"/>
    <property type="evidence" value="ECO:0007669"/>
    <property type="project" value="TreeGrafter"/>
</dbReference>
<dbReference type="FunFam" id="3.20.20.380:FF:000001">
    <property type="entry name" value="Copper homeostasis protein CutC"/>
    <property type="match status" value="1"/>
</dbReference>
<dbReference type="Gene3D" id="3.20.20.380">
    <property type="entry name" value="Copper homeostasis (CutC) domain"/>
    <property type="match status" value="1"/>
</dbReference>
<dbReference type="HAMAP" id="MF_00795">
    <property type="entry name" value="CutC"/>
    <property type="match status" value="1"/>
</dbReference>
<dbReference type="InterPro" id="IPR005627">
    <property type="entry name" value="CutC-like"/>
</dbReference>
<dbReference type="InterPro" id="IPR036822">
    <property type="entry name" value="CutC-like_dom_sf"/>
</dbReference>
<dbReference type="PANTHER" id="PTHR12598">
    <property type="entry name" value="COPPER HOMEOSTASIS PROTEIN CUTC"/>
    <property type="match status" value="1"/>
</dbReference>
<dbReference type="PANTHER" id="PTHR12598:SF0">
    <property type="entry name" value="COPPER HOMEOSTASIS PROTEIN CUTC HOMOLOG"/>
    <property type="match status" value="1"/>
</dbReference>
<dbReference type="Pfam" id="PF03932">
    <property type="entry name" value="CutC"/>
    <property type="match status" value="1"/>
</dbReference>
<dbReference type="SUPFAM" id="SSF110395">
    <property type="entry name" value="CutC-like"/>
    <property type="match status" value="1"/>
</dbReference>
<feature type="chain" id="PRO_0000215081" description="PF03932 family protein CutC">
    <location>
        <begin position="1"/>
        <end position="250"/>
    </location>
</feature>
<gene>
    <name evidence="1" type="primary">cutC</name>
    <name type="ordered locus">VV0738</name>
</gene>
<sequence>MSYQVEVCIDNIESLHNALEGGATRIELCSSLALGGLTPSYGFMTLAAKLSTVPVYAMIRPRQGDFLYSDDEFAIIQQDILSAQQAGLQGVVFGLLTADGDIDVARTRVLIELAHSLQLGVTFHRAFDQCRDPFAALEQIIDLGCERILTSGLAASAPLGKEMLTQLVAHSQSRLAIMAGAGVSPVNVADLALTTGVKELHLSGKSTRPSKMTFIASGSKMGAADQDDFIIPITHTATIRNTVLALKSIS</sequence>
<organism>
    <name type="scientific">Vibrio vulnificus (strain YJ016)</name>
    <dbReference type="NCBI Taxonomy" id="196600"/>
    <lineage>
        <taxon>Bacteria</taxon>
        <taxon>Pseudomonadati</taxon>
        <taxon>Pseudomonadota</taxon>
        <taxon>Gammaproteobacteria</taxon>
        <taxon>Vibrionales</taxon>
        <taxon>Vibrionaceae</taxon>
        <taxon>Vibrio</taxon>
    </lineage>
</organism>
<comment type="subcellular location">
    <subcellularLocation>
        <location evidence="1">Cytoplasm</location>
    </subcellularLocation>
</comment>
<comment type="similarity">
    <text evidence="1">Belongs to the CutC family.</text>
</comment>
<comment type="caution">
    <text evidence="1">Once thought to be involved in copper homeostasis, experiments in E.coli have shown this is not the case.</text>
</comment>
<accession>Q7MNH9</accession>
<protein>
    <recommendedName>
        <fullName evidence="1">PF03932 family protein CutC</fullName>
    </recommendedName>
</protein>
<proteinExistence type="inferred from homology"/>
<evidence type="ECO:0000255" key="1">
    <source>
        <dbReference type="HAMAP-Rule" id="MF_00795"/>
    </source>
</evidence>
<keyword id="KW-0963">Cytoplasm</keyword>